<gene>
    <name evidence="1" type="primary">coaD</name>
    <name type="ordered locus">SeHA_C4051</name>
</gene>
<evidence type="ECO:0000255" key="1">
    <source>
        <dbReference type="HAMAP-Rule" id="MF_00151"/>
    </source>
</evidence>
<comment type="function">
    <text evidence="1">Reversibly transfers an adenylyl group from ATP to 4'-phosphopantetheine, yielding dephospho-CoA (dPCoA) and pyrophosphate.</text>
</comment>
<comment type="catalytic activity">
    <reaction evidence="1">
        <text>(R)-4'-phosphopantetheine + ATP + H(+) = 3'-dephospho-CoA + diphosphate</text>
        <dbReference type="Rhea" id="RHEA:19801"/>
        <dbReference type="ChEBI" id="CHEBI:15378"/>
        <dbReference type="ChEBI" id="CHEBI:30616"/>
        <dbReference type="ChEBI" id="CHEBI:33019"/>
        <dbReference type="ChEBI" id="CHEBI:57328"/>
        <dbReference type="ChEBI" id="CHEBI:61723"/>
        <dbReference type="EC" id="2.7.7.3"/>
    </reaction>
</comment>
<comment type="cofactor">
    <cofactor evidence="1">
        <name>Mg(2+)</name>
        <dbReference type="ChEBI" id="CHEBI:18420"/>
    </cofactor>
</comment>
<comment type="pathway">
    <text evidence="1">Cofactor biosynthesis; coenzyme A biosynthesis; CoA from (R)-pantothenate: step 4/5.</text>
</comment>
<comment type="subunit">
    <text evidence="1">Homohexamer.</text>
</comment>
<comment type="subcellular location">
    <subcellularLocation>
        <location evidence="1">Cytoplasm</location>
    </subcellularLocation>
</comment>
<comment type="similarity">
    <text evidence="1">Belongs to the bacterial CoaD family.</text>
</comment>
<proteinExistence type="inferred from homology"/>
<reference key="1">
    <citation type="journal article" date="2011" name="J. Bacteriol.">
        <title>Comparative genomics of 28 Salmonella enterica isolates: evidence for CRISPR-mediated adaptive sublineage evolution.</title>
        <authorList>
            <person name="Fricke W.F."/>
            <person name="Mammel M.K."/>
            <person name="McDermott P.F."/>
            <person name="Tartera C."/>
            <person name="White D.G."/>
            <person name="Leclerc J.E."/>
            <person name="Ravel J."/>
            <person name="Cebula T.A."/>
        </authorList>
    </citation>
    <scope>NUCLEOTIDE SEQUENCE [LARGE SCALE GENOMIC DNA]</scope>
    <source>
        <strain>SL476</strain>
    </source>
</reference>
<protein>
    <recommendedName>
        <fullName evidence="1">Phosphopantetheine adenylyltransferase</fullName>
        <ecNumber evidence="1">2.7.7.3</ecNumber>
    </recommendedName>
    <alternativeName>
        <fullName evidence="1">Dephospho-CoA pyrophosphorylase</fullName>
    </alternativeName>
    <alternativeName>
        <fullName evidence="1">Pantetheine-phosphate adenylyltransferase</fullName>
        <shortName evidence="1">PPAT</shortName>
    </alternativeName>
</protein>
<keyword id="KW-0067">ATP-binding</keyword>
<keyword id="KW-0173">Coenzyme A biosynthesis</keyword>
<keyword id="KW-0963">Cytoplasm</keyword>
<keyword id="KW-0460">Magnesium</keyword>
<keyword id="KW-0547">Nucleotide-binding</keyword>
<keyword id="KW-0548">Nucleotidyltransferase</keyword>
<keyword id="KW-0808">Transferase</keyword>
<organism>
    <name type="scientific">Salmonella heidelberg (strain SL476)</name>
    <dbReference type="NCBI Taxonomy" id="454169"/>
    <lineage>
        <taxon>Bacteria</taxon>
        <taxon>Pseudomonadati</taxon>
        <taxon>Pseudomonadota</taxon>
        <taxon>Gammaproteobacteria</taxon>
        <taxon>Enterobacterales</taxon>
        <taxon>Enterobacteriaceae</taxon>
        <taxon>Salmonella</taxon>
    </lineage>
</organism>
<accession>B4T9B9</accession>
<name>COAD_SALHS</name>
<feature type="chain" id="PRO_1000096836" description="Phosphopantetheine adenylyltransferase">
    <location>
        <begin position="1"/>
        <end position="159"/>
    </location>
</feature>
<feature type="binding site" evidence="1">
    <location>
        <begin position="10"/>
        <end position="11"/>
    </location>
    <ligand>
        <name>ATP</name>
        <dbReference type="ChEBI" id="CHEBI:30616"/>
    </ligand>
</feature>
<feature type="binding site" evidence="1">
    <location>
        <position position="10"/>
    </location>
    <ligand>
        <name>substrate</name>
    </ligand>
</feature>
<feature type="binding site" evidence="1">
    <location>
        <position position="18"/>
    </location>
    <ligand>
        <name>ATP</name>
        <dbReference type="ChEBI" id="CHEBI:30616"/>
    </ligand>
</feature>
<feature type="binding site" evidence="1">
    <location>
        <position position="42"/>
    </location>
    <ligand>
        <name>substrate</name>
    </ligand>
</feature>
<feature type="binding site" evidence="1">
    <location>
        <position position="74"/>
    </location>
    <ligand>
        <name>substrate</name>
    </ligand>
</feature>
<feature type="binding site" evidence="1">
    <location>
        <position position="88"/>
    </location>
    <ligand>
        <name>substrate</name>
    </ligand>
</feature>
<feature type="binding site" evidence="1">
    <location>
        <begin position="89"/>
        <end position="91"/>
    </location>
    <ligand>
        <name>ATP</name>
        <dbReference type="ChEBI" id="CHEBI:30616"/>
    </ligand>
</feature>
<feature type="binding site" evidence="1">
    <location>
        <position position="99"/>
    </location>
    <ligand>
        <name>ATP</name>
        <dbReference type="ChEBI" id="CHEBI:30616"/>
    </ligand>
</feature>
<feature type="binding site" evidence="1">
    <location>
        <begin position="124"/>
        <end position="130"/>
    </location>
    <ligand>
        <name>ATP</name>
        <dbReference type="ChEBI" id="CHEBI:30616"/>
    </ligand>
</feature>
<feature type="site" description="Transition state stabilizer" evidence="1">
    <location>
        <position position="18"/>
    </location>
</feature>
<sequence>MQKRAIYPGTFDPITNGHLDIVTRATQMFDHVILAIAASPGKKPMFTLDERVALAQKATAHLGNVEVVGFSDLMANFARDRQANILIRGLRAVADFEYEMQLAHMNRHLMPQLESVFLMPSKEWSFISSSLVKEVARHQGDVTHFLPDNVHQALMDKLK</sequence>
<dbReference type="EC" id="2.7.7.3" evidence="1"/>
<dbReference type="EMBL" id="CP001120">
    <property type="protein sequence ID" value="ACF66802.1"/>
    <property type="molecule type" value="Genomic_DNA"/>
</dbReference>
<dbReference type="RefSeq" id="WP_001171884.1">
    <property type="nucleotide sequence ID" value="NC_011083.1"/>
</dbReference>
<dbReference type="SMR" id="B4T9B9"/>
<dbReference type="KEGG" id="seh:SeHA_C4051"/>
<dbReference type="HOGENOM" id="CLU_100149_0_1_6"/>
<dbReference type="UniPathway" id="UPA00241">
    <property type="reaction ID" value="UER00355"/>
</dbReference>
<dbReference type="Proteomes" id="UP000001866">
    <property type="component" value="Chromosome"/>
</dbReference>
<dbReference type="GO" id="GO:0005737">
    <property type="term" value="C:cytoplasm"/>
    <property type="evidence" value="ECO:0007669"/>
    <property type="project" value="UniProtKB-SubCell"/>
</dbReference>
<dbReference type="GO" id="GO:0005524">
    <property type="term" value="F:ATP binding"/>
    <property type="evidence" value="ECO:0007669"/>
    <property type="project" value="UniProtKB-KW"/>
</dbReference>
<dbReference type="GO" id="GO:0004595">
    <property type="term" value="F:pantetheine-phosphate adenylyltransferase activity"/>
    <property type="evidence" value="ECO:0007669"/>
    <property type="project" value="UniProtKB-UniRule"/>
</dbReference>
<dbReference type="GO" id="GO:0015937">
    <property type="term" value="P:coenzyme A biosynthetic process"/>
    <property type="evidence" value="ECO:0007669"/>
    <property type="project" value="UniProtKB-UniRule"/>
</dbReference>
<dbReference type="CDD" id="cd02163">
    <property type="entry name" value="PPAT"/>
    <property type="match status" value="1"/>
</dbReference>
<dbReference type="FunFam" id="3.40.50.620:FF:000012">
    <property type="entry name" value="Phosphopantetheine adenylyltransferase"/>
    <property type="match status" value="1"/>
</dbReference>
<dbReference type="Gene3D" id="3.40.50.620">
    <property type="entry name" value="HUPs"/>
    <property type="match status" value="1"/>
</dbReference>
<dbReference type="HAMAP" id="MF_00151">
    <property type="entry name" value="PPAT_bact"/>
    <property type="match status" value="1"/>
</dbReference>
<dbReference type="InterPro" id="IPR004821">
    <property type="entry name" value="Cyt_trans-like"/>
</dbReference>
<dbReference type="InterPro" id="IPR001980">
    <property type="entry name" value="PPAT"/>
</dbReference>
<dbReference type="InterPro" id="IPR014729">
    <property type="entry name" value="Rossmann-like_a/b/a_fold"/>
</dbReference>
<dbReference type="NCBIfam" id="TIGR01510">
    <property type="entry name" value="coaD_prev_kdtB"/>
    <property type="match status" value="1"/>
</dbReference>
<dbReference type="NCBIfam" id="TIGR00125">
    <property type="entry name" value="cyt_tran_rel"/>
    <property type="match status" value="1"/>
</dbReference>
<dbReference type="PANTHER" id="PTHR21342">
    <property type="entry name" value="PHOSPHOPANTETHEINE ADENYLYLTRANSFERASE"/>
    <property type="match status" value="1"/>
</dbReference>
<dbReference type="PANTHER" id="PTHR21342:SF1">
    <property type="entry name" value="PHOSPHOPANTETHEINE ADENYLYLTRANSFERASE"/>
    <property type="match status" value="1"/>
</dbReference>
<dbReference type="Pfam" id="PF01467">
    <property type="entry name" value="CTP_transf_like"/>
    <property type="match status" value="1"/>
</dbReference>
<dbReference type="PRINTS" id="PR01020">
    <property type="entry name" value="LPSBIOSNTHSS"/>
</dbReference>
<dbReference type="SUPFAM" id="SSF52374">
    <property type="entry name" value="Nucleotidylyl transferase"/>
    <property type="match status" value="1"/>
</dbReference>